<protein>
    <recommendedName>
        <fullName evidence="5">Probable G-protein coupled receptor egl-47</fullName>
    </recommendedName>
    <alternativeName>
        <fullName evidence="7">Egg laying defective protein egl-47</fullName>
    </alternativeName>
</protein>
<name>EGL47_CAEEL</name>
<dbReference type="EMBL" id="AY532645">
    <property type="protein sequence ID" value="AAS21318.1"/>
    <property type="molecule type" value="mRNA"/>
</dbReference>
<dbReference type="EMBL" id="BX284605">
    <property type="protein sequence ID" value="CAA98250.1"/>
    <property type="molecule type" value="Genomic_DNA"/>
</dbReference>
<dbReference type="EMBL" id="BX284605">
    <property type="protein sequence ID" value="CAH04730.1"/>
    <property type="molecule type" value="Genomic_DNA"/>
</dbReference>
<dbReference type="PIR" id="T20124">
    <property type="entry name" value="T20124"/>
</dbReference>
<dbReference type="RefSeq" id="NP_001023728.1">
    <molecule id="G5EDX4-1"/>
    <property type="nucleotide sequence ID" value="NM_001028557.3"/>
</dbReference>
<dbReference type="RefSeq" id="NP_001023729.1">
    <molecule id="G5EDX4-2"/>
    <property type="nucleotide sequence ID" value="NM_001028558.3"/>
</dbReference>
<dbReference type="FunCoup" id="G5EDX4">
    <property type="interactions" value="9"/>
</dbReference>
<dbReference type="STRING" id="6239.C50H2.2a.1"/>
<dbReference type="PaxDb" id="6239-C50H2.2a"/>
<dbReference type="EnsemblMetazoa" id="C50H2.2a.1">
    <molecule id="G5EDX4-1"/>
    <property type="protein sequence ID" value="C50H2.2a.1"/>
    <property type="gene ID" value="WBGene00001211"/>
</dbReference>
<dbReference type="EnsemblMetazoa" id="C50H2.2b.1">
    <molecule id="G5EDX4-2"/>
    <property type="protein sequence ID" value="C50H2.2b.1"/>
    <property type="gene ID" value="WBGene00001211"/>
</dbReference>
<dbReference type="GeneID" id="183687"/>
<dbReference type="KEGG" id="cel:CELE_C50H2.2"/>
<dbReference type="UCSC" id="C50H2.2a">
    <property type="organism name" value="c. elegans"/>
</dbReference>
<dbReference type="AGR" id="WB:WBGene00001211"/>
<dbReference type="CTD" id="183687"/>
<dbReference type="WormBase" id="C50H2.2a">
    <molecule id="G5EDX4-1"/>
    <property type="protein sequence ID" value="CE36586"/>
    <property type="gene ID" value="WBGene00001211"/>
    <property type="gene designation" value="egl-47"/>
</dbReference>
<dbReference type="WormBase" id="C50H2.2b">
    <property type="protein sequence ID" value="CE05480"/>
    <property type="gene ID" value="WBGene00001211"/>
    <property type="gene designation" value="egl-47"/>
</dbReference>
<dbReference type="eggNOG" id="ENOG502SRBC">
    <property type="taxonomic scope" value="Eukaryota"/>
</dbReference>
<dbReference type="HOGENOM" id="CLU_521987_0_0_1"/>
<dbReference type="OMA" id="KENPAMT"/>
<dbReference type="OrthoDB" id="5782746at2759"/>
<dbReference type="Proteomes" id="UP000001940">
    <property type="component" value="Chromosome V"/>
</dbReference>
<dbReference type="Bgee" id="WBGene00001211">
    <property type="expression patterns" value="Expressed in larva and 1 other cell type or tissue"/>
</dbReference>
<dbReference type="ExpressionAtlas" id="G5EDX4">
    <property type="expression patterns" value="baseline and differential"/>
</dbReference>
<dbReference type="GO" id="GO:0030424">
    <property type="term" value="C:axon"/>
    <property type="evidence" value="ECO:0000318"/>
    <property type="project" value="GO_Central"/>
</dbReference>
<dbReference type="GO" id="GO:0030425">
    <property type="term" value="C:dendrite"/>
    <property type="evidence" value="ECO:0000318"/>
    <property type="project" value="GO_Central"/>
</dbReference>
<dbReference type="GO" id="GO:0016020">
    <property type="term" value="C:membrane"/>
    <property type="evidence" value="ECO:0000250"/>
    <property type="project" value="WormBase"/>
</dbReference>
<dbReference type="GO" id="GO:0043025">
    <property type="term" value="C:neuronal cell body"/>
    <property type="evidence" value="ECO:0000318"/>
    <property type="project" value="GO_Central"/>
</dbReference>
<dbReference type="GO" id="GO:0004930">
    <property type="term" value="F:G protein-coupled receptor activity"/>
    <property type="evidence" value="ECO:0000250"/>
    <property type="project" value="WormBase"/>
</dbReference>
<dbReference type="GO" id="GO:0018991">
    <property type="term" value="P:egg-laying behavior"/>
    <property type="evidence" value="ECO:0000315"/>
    <property type="project" value="WormBase"/>
</dbReference>
<dbReference type="GO" id="GO:0007186">
    <property type="term" value="P:G protein-coupled receptor signaling pathway"/>
    <property type="evidence" value="ECO:0000316"/>
    <property type="project" value="WormBase"/>
</dbReference>
<dbReference type="GO" id="GO:0050909">
    <property type="term" value="P:sensory perception of taste"/>
    <property type="evidence" value="ECO:0007669"/>
    <property type="project" value="InterPro"/>
</dbReference>
<dbReference type="InterPro" id="IPR013604">
    <property type="entry name" value="7TM_chemorcpt"/>
</dbReference>
<dbReference type="PANTHER" id="PTHR21143:SF121">
    <property type="entry name" value="GUSTATORY AND ODORANT RECEPTOR 21A"/>
    <property type="match status" value="1"/>
</dbReference>
<dbReference type="PANTHER" id="PTHR21143">
    <property type="entry name" value="INVERTEBRATE GUSTATORY RECEPTOR"/>
    <property type="match status" value="1"/>
</dbReference>
<dbReference type="Pfam" id="PF08395">
    <property type="entry name" value="7tm_7"/>
    <property type="match status" value="1"/>
</dbReference>
<dbReference type="PROSITE" id="PS00092">
    <property type="entry name" value="N6_MTASE"/>
    <property type="match status" value="1"/>
</dbReference>
<feature type="chain" id="PRO_0000460613" description="Probable G-protein coupled receptor egl-47">
    <location>
        <begin position="1"/>
        <end position="522"/>
    </location>
</feature>
<feature type="transmembrane region" description="Helical" evidence="1">
    <location>
        <begin position="140"/>
        <end position="160"/>
    </location>
</feature>
<feature type="transmembrane region" description="Helical" evidence="1">
    <location>
        <begin position="184"/>
        <end position="204"/>
    </location>
</feature>
<feature type="transmembrane region" description="Helical" evidence="1">
    <location>
        <begin position="238"/>
        <end position="258"/>
    </location>
</feature>
<feature type="transmembrane region" description="Helical" evidence="1">
    <location>
        <begin position="276"/>
        <end position="296"/>
    </location>
</feature>
<feature type="transmembrane region" description="Helical" evidence="1">
    <location>
        <begin position="345"/>
        <end position="365"/>
    </location>
</feature>
<feature type="transmembrane region" description="Helical" evidence="1">
    <location>
        <begin position="398"/>
        <end position="418"/>
    </location>
</feature>
<feature type="transmembrane region" description="Helical" evidence="1">
    <location>
        <begin position="472"/>
        <end position="492"/>
    </location>
</feature>
<feature type="splice variant" id="VSP_062363" description="In isoform b." evidence="4">
    <original>YPFNRTTSIHAESASQHIDELDDDDFGRSNGKFYSNRHSQMDSDVVAHQVPPGSPVEKTILASILEMSTINDMWVKTFTAPGANKKDKKRRESLFECSW</original>
    <variation>PSFSNGSPLHIDLSQHHPDNHSHRNNIHKPNMDNLDNSDVENALILDNLDNHHMTSNEQFPPSGR</variation>
    <location>
        <begin position="2"/>
        <end position="100"/>
    </location>
</feature>
<feature type="mutagenesis site" description="In n1081dm and n1082dm; probably gain-of-function, activating mutations. Causes accumulation of unlaid eggs. Hermaphrodite-specific neurons (HSNs) appear morphologically normal. In n1081dm and n1082dm; probably gain-of-function, activating mutations. Causes accumulation of unlaid eggs. Hermaphrodite-specific neurons (HSNs) appear morphologically normal." evidence="2">
    <original>A</original>
    <variation>V</variation>
    <location>
        <position position="401"/>
    </location>
</feature>
<feature type="sequence conflict" description="In Ref. 1." evidence="4" ref="1">
    <location>
        <position position="152"/>
    </location>
</feature>
<evidence type="ECO:0000255" key="1"/>
<evidence type="ECO:0000269" key="2">
    <source>
    </source>
</evidence>
<evidence type="ECO:0000303" key="3">
    <source>
    </source>
</evidence>
<evidence type="ECO:0000305" key="4"/>
<evidence type="ECO:0000305" key="5">
    <source>
    </source>
</evidence>
<evidence type="ECO:0000312" key="6">
    <source>
        <dbReference type="Proteomes" id="UP000001940"/>
    </source>
</evidence>
<evidence type="ECO:0000312" key="7">
    <source>
        <dbReference type="WormBase" id="C50H2.2a"/>
    </source>
</evidence>
<evidence type="ECO:0000312" key="8">
    <source>
        <dbReference type="WormBase" id="C50H2.2b"/>
    </source>
</evidence>
<proteinExistence type="evidence at protein level"/>
<keyword id="KW-0877">Alternative promoter usage</keyword>
<keyword id="KW-0472">Membrane</keyword>
<keyword id="KW-0675">Receptor</keyword>
<keyword id="KW-1185">Reference proteome</keyword>
<keyword id="KW-0812">Transmembrane</keyword>
<keyword id="KW-1133">Transmembrane helix</keyword>
<sequence length="522" mass="60088">MYPFNRTTSIHAESASQHIDELDDDDFGRSNGKFYSNRHSQMDSDVVAHQVPPGSPVEKTILASILEMSTINDMWVKTFTAPGANKKDKKRRESLFECSWRGVHCVSNSLRSILFLFRLLAIFPATTDRKSRRKRNHRSIIKLILYVNYIVLAVLLNSFLIKMNFKVLMLYKHKFGLMHTGTVASMITATKPVINVFVIVLSAIKFKSHQRLLKTIDMVDVCFRSAFGVSPPLRIYKFVFFFTLLIIFFSALILKVVEFVGTGEIFGEHILTDCSFILVPVLSLWNIIPLLYYHLYNILVRFYCRTLIKSMNREHKKRHFSLKFYYEQFTRITNVQEAVGDVFNPLLLFSLAWSLLVLCLTLYFLSEPTSTLLVPITPEQVTNPKIREKLNITVHVKICWAAYQVVMAILHIIIICSTGMMTNETTRQIVNAVLRIVPDANADLDRFQISCFVHKMTTQFMWGMTVWRAFPLERTTFFTLISVIVTYSLLLFRFKDDMVQNPPYMAAMAVFNTSAVPTPAPG</sequence>
<accession>G5EDX4</accession>
<accession>Q18760</accession>
<comment type="function">
    <text evidence="2">Orphan receptor. Regulates egg-laying probably by activating guanine nucleotide-binding protein goa-1, in the hermaphrodite-specific neurons (HSNs).</text>
</comment>
<comment type="subcellular location">
    <subcellularLocation>
        <location evidence="1">Membrane</location>
        <topology evidence="1">Multi-pass membrane protein</topology>
    </subcellularLocation>
</comment>
<comment type="alternative products">
    <event type="alternative promoter"/>
    <isoform>
        <id>G5EDX4-1</id>
        <name evidence="7">a</name>
        <sequence type="displayed"/>
    </isoform>
    <isoform>
        <id>G5EDX4-2</id>
        <name evidence="8">b</name>
        <sequence type="described" ref="VSP_062363"/>
    </isoform>
</comment>
<comment type="tissue specificity">
    <text evidence="2">Expressed in some neurons in the head, the HSN neurons and the PVQ interneurons of the tail.</text>
</comment>
<comment type="developmental stage">
    <text evidence="2">In the egg-laying system, expressed only in the HSN neurons of adult worms but found in both the vulval and HSN cells of larval stage 4 worms.</text>
</comment>
<comment type="disruption phenotype">
    <text evidence="2">Similar number of unlaid eggs as wild-type animals.</text>
</comment>
<comment type="similarity">
    <text evidence="3 4">Belongs to the G-protein coupled receptor family.</text>
</comment>
<gene>
    <name evidence="7" type="primary">egl-47</name>
    <name evidence="7" type="ORF">C50H2.2</name>
</gene>
<organism evidence="6">
    <name type="scientific">Caenorhabditis elegans</name>
    <dbReference type="NCBI Taxonomy" id="6239"/>
    <lineage>
        <taxon>Eukaryota</taxon>
        <taxon>Metazoa</taxon>
        <taxon>Ecdysozoa</taxon>
        <taxon>Nematoda</taxon>
        <taxon>Chromadorea</taxon>
        <taxon>Rhabditida</taxon>
        <taxon>Rhabditina</taxon>
        <taxon>Rhabditomorpha</taxon>
        <taxon>Rhabditoidea</taxon>
        <taxon>Rhabditidae</taxon>
        <taxon>Peloderinae</taxon>
        <taxon>Caenorhabditis</taxon>
    </lineage>
</organism>
<reference evidence="4" key="1">
    <citation type="journal article" date="2004" name="J. Neurosci.">
        <title>Activation of EGL-47, a Galpha(o)-coupled receptor, inhibits function of hermaphrodite-specific motor neurons to regulate Caenorhabditis elegans egg-laying behavior.</title>
        <authorList>
            <person name="Moresco J.J."/>
            <person name="Koelle M.R."/>
        </authorList>
    </citation>
    <scope>NUCLEOTIDE SEQUENCE [MRNA] (ISOFORM A)</scope>
    <scope>FUNCTION</scope>
    <scope>TISSUE SPECIFICITY</scope>
    <scope>DEVELOPMENTAL STAGE</scope>
    <scope>DISRUPTION PHENOTYPE</scope>
    <scope>MUTAGENESIS OF ALA-401</scope>
</reference>
<reference evidence="6" key="2">
    <citation type="journal article" date="1998" name="Science">
        <title>Genome sequence of the nematode C. elegans: a platform for investigating biology.</title>
        <authorList>
            <consortium name="The C. elegans sequencing consortium"/>
        </authorList>
    </citation>
    <scope>NUCLEOTIDE SEQUENCE [LARGE SCALE GENOMIC DNA] (ISOFORMS A AND B)</scope>
    <source>
        <strain evidence="6">Bristol N2</strain>
    </source>
</reference>